<proteinExistence type="inferred from homology"/>
<name>PANB_FRATO</name>
<protein>
    <recommendedName>
        <fullName evidence="1">3-methyl-2-oxobutanoate hydroxymethyltransferase</fullName>
        <ecNumber evidence="1">2.1.2.11</ecNumber>
    </recommendedName>
    <alternativeName>
        <fullName evidence="1">Ketopantoate hydroxymethyltransferase</fullName>
        <shortName evidence="1">KPHMT</shortName>
    </alternativeName>
</protein>
<comment type="function">
    <text evidence="1">Catalyzes the reversible reaction in which hydroxymethyl group from 5,10-methylenetetrahydrofolate is transferred onto alpha-ketoisovalerate to form ketopantoate.</text>
</comment>
<comment type="catalytic activity">
    <reaction evidence="1">
        <text>3-methyl-2-oxobutanoate + (6R)-5,10-methylene-5,6,7,8-tetrahydrofolate + H2O = 2-dehydropantoate + (6S)-5,6,7,8-tetrahydrofolate</text>
        <dbReference type="Rhea" id="RHEA:11824"/>
        <dbReference type="ChEBI" id="CHEBI:11561"/>
        <dbReference type="ChEBI" id="CHEBI:11851"/>
        <dbReference type="ChEBI" id="CHEBI:15377"/>
        <dbReference type="ChEBI" id="CHEBI:15636"/>
        <dbReference type="ChEBI" id="CHEBI:57453"/>
        <dbReference type="EC" id="2.1.2.11"/>
    </reaction>
</comment>
<comment type="cofactor">
    <cofactor evidence="1">
        <name>Mg(2+)</name>
        <dbReference type="ChEBI" id="CHEBI:18420"/>
    </cofactor>
    <text evidence="1">Binds 1 Mg(2+) ion per subunit.</text>
</comment>
<comment type="pathway">
    <text evidence="1">Cofactor biosynthesis; (R)-pantothenate biosynthesis; (R)-pantoate from 3-methyl-2-oxobutanoate: step 1/2.</text>
</comment>
<comment type="subunit">
    <text evidence="1">Homodecamer; pentamer of dimers.</text>
</comment>
<comment type="subcellular location">
    <subcellularLocation>
        <location evidence="1">Cytoplasm</location>
    </subcellularLocation>
</comment>
<comment type="similarity">
    <text evidence="1">Belongs to the PanB family.</text>
</comment>
<comment type="sequence caution" evidence="2">
    <conflict type="erroneous initiation">
        <sequence resource="EMBL-CDS" id="ABI82629"/>
    </conflict>
</comment>
<organism>
    <name type="scientific">Francisella tularensis subsp. holarctica (strain OSU18)</name>
    <dbReference type="NCBI Taxonomy" id="393011"/>
    <lineage>
        <taxon>Bacteria</taxon>
        <taxon>Pseudomonadati</taxon>
        <taxon>Pseudomonadota</taxon>
        <taxon>Gammaproteobacteria</taxon>
        <taxon>Thiotrichales</taxon>
        <taxon>Francisellaceae</taxon>
        <taxon>Francisella</taxon>
    </lineage>
</organism>
<feature type="chain" id="PRO_0000297268" description="3-methyl-2-oxobutanoate hydroxymethyltransferase">
    <location>
        <begin position="1"/>
        <end position="265"/>
    </location>
</feature>
<feature type="active site" description="Proton acceptor" evidence="1">
    <location>
        <position position="180"/>
    </location>
</feature>
<feature type="binding site" evidence="1">
    <location>
        <begin position="43"/>
        <end position="44"/>
    </location>
    <ligand>
        <name>3-methyl-2-oxobutanoate</name>
        <dbReference type="ChEBI" id="CHEBI:11851"/>
    </ligand>
</feature>
<feature type="binding site" evidence="1">
    <location>
        <position position="43"/>
    </location>
    <ligand>
        <name>Mg(2+)</name>
        <dbReference type="ChEBI" id="CHEBI:18420"/>
    </ligand>
</feature>
<feature type="binding site" evidence="1">
    <location>
        <position position="82"/>
    </location>
    <ligand>
        <name>3-methyl-2-oxobutanoate</name>
        <dbReference type="ChEBI" id="CHEBI:11851"/>
    </ligand>
</feature>
<feature type="binding site" evidence="1">
    <location>
        <position position="82"/>
    </location>
    <ligand>
        <name>Mg(2+)</name>
        <dbReference type="ChEBI" id="CHEBI:18420"/>
    </ligand>
</feature>
<feature type="binding site" evidence="1">
    <location>
        <position position="111"/>
    </location>
    <ligand>
        <name>3-methyl-2-oxobutanoate</name>
        <dbReference type="ChEBI" id="CHEBI:11851"/>
    </ligand>
</feature>
<feature type="binding site" evidence="1">
    <location>
        <position position="113"/>
    </location>
    <ligand>
        <name>Mg(2+)</name>
        <dbReference type="ChEBI" id="CHEBI:18420"/>
    </ligand>
</feature>
<accession>Q0BMQ5</accession>
<evidence type="ECO:0000255" key="1">
    <source>
        <dbReference type="HAMAP-Rule" id="MF_00156"/>
    </source>
</evidence>
<evidence type="ECO:0000305" key="2"/>
<reference key="1">
    <citation type="journal article" date="2006" name="J. Bacteriol.">
        <title>Chromosome rearrangement and diversification of Francisella tularensis revealed by the type B (OSU18) genome sequence.</title>
        <authorList>
            <person name="Petrosino J.F."/>
            <person name="Xiang Q."/>
            <person name="Karpathy S.E."/>
            <person name="Jiang H."/>
            <person name="Yerrapragada S."/>
            <person name="Liu Y."/>
            <person name="Gioia J."/>
            <person name="Hemphill L."/>
            <person name="Gonzalez A."/>
            <person name="Raghavan T.M."/>
            <person name="Uzman A."/>
            <person name="Fox G.E."/>
            <person name="Highlander S."/>
            <person name="Reichard M."/>
            <person name="Morton R.J."/>
            <person name="Clinkenbeard K.D."/>
            <person name="Weinstock G.M."/>
        </authorList>
    </citation>
    <scope>NUCLEOTIDE SEQUENCE [LARGE SCALE GENOMIC DNA]</scope>
    <source>
        <strain>OSU18</strain>
    </source>
</reference>
<keyword id="KW-0963">Cytoplasm</keyword>
<keyword id="KW-0460">Magnesium</keyword>
<keyword id="KW-0479">Metal-binding</keyword>
<keyword id="KW-0566">Pantothenate biosynthesis</keyword>
<keyword id="KW-0808">Transferase</keyword>
<sequence>MKSVLGFKKAKVTQEKISMVTCYDYTLAKIINSTDIDCILVGDSGGMVLLGKKNTTYTTLDDMQFMTQAVANGATDKFIVADLPFMSYRQSLETTMQAVMALIQSGAHAIKLEGSSGNLDIIKHIVDSGVPIMGHIGMTPQFINSFGGFKVQGRTEEAAKHLLEEAKLLEQAGCFGIVLECIPANIAKDITQNLDIPTIGIGAGSNTDGQILVLQDMLGMNTDFQPKFVKKYIDGSKLFSDAINTYVKETKANTFPTKEHCYDYC</sequence>
<dbReference type="EC" id="2.1.2.11" evidence="1"/>
<dbReference type="EMBL" id="CP000437">
    <property type="protein sequence ID" value="ABI82629.1"/>
    <property type="status" value="ALT_INIT"/>
    <property type="molecule type" value="Genomic_DNA"/>
</dbReference>
<dbReference type="RefSeq" id="WP_012118968.1">
    <property type="nucleotide sequence ID" value="NC_017463.1"/>
</dbReference>
<dbReference type="SMR" id="Q0BMQ5"/>
<dbReference type="KEGG" id="fth:FTH_0677"/>
<dbReference type="UniPathway" id="UPA00028">
    <property type="reaction ID" value="UER00003"/>
</dbReference>
<dbReference type="GO" id="GO:0005737">
    <property type="term" value="C:cytoplasm"/>
    <property type="evidence" value="ECO:0007669"/>
    <property type="project" value="UniProtKB-SubCell"/>
</dbReference>
<dbReference type="GO" id="GO:0003864">
    <property type="term" value="F:3-methyl-2-oxobutanoate hydroxymethyltransferase activity"/>
    <property type="evidence" value="ECO:0007669"/>
    <property type="project" value="UniProtKB-UniRule"/>
</dbReference>
<dbReference type="GO" id="GO:0000287">
    <property type="term" value="F:magnesium ion binding"/>
    <property type="evidence" value="ECO:0007669"/>
    <property type="project" value="TreeGrafter"/>
</dbReference>
<dbReference type="GO" id="GO:0015940">
    <property type="term" value="P:pantothenate biosynthetic process"/>
    <property type="evidence" value="ECO:0007669"/>
    <property type="project" value="UniProtKB-UniRule"/>
</dbReference>
<dbReference type="CDD" id="cd06557">
    <property type="entry name" value="KPHMT-like"/>
    <property type="match status" value="1"/>
</dbReference>
<dbReference type="FunFam" id="3.20.20.60:FF:000003">
    <property type="entry name" value="3-methyl-2-oxobutanoate hydroxymethyltransferase"/>
    <property type="match status" value="1"/>
</dbReference>
<dbReference type="Gene3D" id="3.20.20.60">
    <property type="entry name" value="Phosphoenolpyruvate-binding domains"/>
    <property type="match status" value="1"/>
</dbReference>
<dbReference type="HAMAP" id="MF_00156">
    <property type="entry name" value="PanB"/>
    <property type="match status" value="1"/>
</dbReference>
<dbReference type="InterPro" id="IPR003700">
    <property type="entry name" value="Pantoate_hydroxy_MeTrfase"/>
</dbReference>
<dbReference type="InterPro" id="IPR015813">
    <property type="entry name" value="Pyrv/PenolPyrv_kinase-like_dom"/>
</dbReference>
<dbReference type="InterPro" id="IPR040442">
    <property type="entry name" value="Pyrv_kinase-like_dom_sf"/>
</dbReference>
<dbReference type="NCBIfam" id="TIGR00222">
    <property type="entry name" value="panB"/>
    <property type="match status" value="1"/>
</dbReference>
<dbReference type="NCBIfam" id="NF001452">
    <property type="entry name" value="PRK00311.1"/>
    <property type="match status" value="1"/>
</dbReference>
<dbReference type="PANTHER" id="PTHR20881">
    <property type="entry name" value="3-METHYL-2-OXOBUTANOATE HYDROXYMETHYLTRANSFERASE"/>
    <property type="match status" value="1"/>
</dbReference>
<dbReference type="PANTHER" id="PTHR20881:SF0">
    <property type="entry name" value="3-METHYL-2-OXOBUTANOATE HYDROXYMETHYLTRANSFERASE"/>
    <property type="match status" value="1"/>
</dbReference>
<dbReference type="Pfam" id="PF02548">
    <property type="entry name" value="Pantoate_transf"/>
    <property type="match status" value="1"/>
</dbReference>
<dbReference type="PIRSF" id="PIRSF000388">
    <property type="entry name" value="Pantoate_hydroxy_MeTrfase"/>
    <property type="match status" value="1"/>
</dbReference>
<dbReference type="SUPFAM" id="SSF51621">
    <property type="entry name" value="Phosphoenolpyruvate/pyruvate domain"/>
    <property type="match status" value="1"/>
</dbReference>
<gene>
    <name evidence="1" type="primary">panB</name>
    <name type="ordered locus">FTH_0677</name>
</gene>